<evidence type="ECO:0000255" key="1">
    <source>
        <dbReference type="HAMAP-Rule" id="MF_00607"/>
    </source>
</evidence>
<organism>
    <name type="scientific">Rhodospirillum rubrum (strain ATCC 11170 / ATH 1.1.1 / DSM 467 / LMG 4362 / NCIMB 8255 / S1)</name>
    <dbReference type="NCBI Taxonomy" id="269796"/>
    <lineage>
        <taxon>Bacteria</taxon>
        <taxon>Pseudomonadati</taxon>
        <taxon>Pseudomonadota</taxon>
        <taxon>Alphaproteobacteria</taxon>
        <taxon>Rhodospirillales</taxon>
        <taxon>Rhodospirillaceae</taxon>
        <taxon>Rhodospirillum</taxon>
    </lineage>
</organism>
<feature type="chain" id="PRO_0000257335" description="Ribosomal RNA small subunit methyltransferase A">
    <location>
        <begin position="1"/>
        <end position="288"/>
    </location>
</feature>
<feature type="binding site" evidence="1">
    <location>
        <position position="37"/>
    </location>
    <ligand>
        <name>S-adenosyl-L-methionine</name>
        <dbReference type="ChEBI" id="CHEBI:59789"/>
    </ligand>
</feature>
<feature type="binding site" evidence="1">
    <location>
        <position position="39"/>
    </location>
    <ligand>
        <name>S-adenosyl-L-methionine</name>
        <dbReference type="ChEBI" id="CHEBI:59789"/>
    </ligand>
</feature>
<feature type="binding site" evidence="1">
    <location>
        <position position="64"/>
    </location>
    <ligand>
        <name>S-adenosyl-L-methionine</name>
        <dbReference type="ChEBI" id="CHEBI:59789"/>
    </ligand>
</feature>
<feature type="binding site" evidence="1">
    <location>
        <position position="86"/>
    </location>
    <ligand>
        <name>S-adenosyl-L-methionine</name>
        <dbReference type="ChEBI" id="CHEBI:59789"/>
    </ligand>
</feature>
<feature type="binding site" evidence="1">
    <location>
        <position position="112"/>
    </location>
    <ligand>
        <name>S-adenosyl-L-methionine</name>
        <dbReference type="ChEBI" id="CHEBI:59789"/>
    </ligand>
</feature>
<feature type="binding site" evidence="1">
    <location>
        <position position="131"/>
    </location>
    <ligand>
        <name>S-adenosyl-L-methionine</name>
        <dbReference type="ChEBI" id="CHEBI:59789"/>
    </ligand>
</feature>
<protein>
    <recommendedName>
        <fullName evidence="1">Ribosomal RNA small subunit methyltransferase A</fullName>
        <ecNumber evidence="1">2.1.1.182</ecNumber>
    </recommendedName>
    <alternativeName>
        <fullName evidence="1">16S rRNA (adenine(1518)-N(6)/adenine(1519)-N(6))-dimethyltransferase</fullName>
    </alternativeName>
    <alternativeName>
        <fullName evidence="1">16S rRNA dimethyladenosine transferase</fullName>
    </alternativeName>
    <alternativeName>
        <fullName evidence="1">16S rRNA dimethylase</fullName>
    </alternativeName>
    <alternativeName>
        <fullName evidence="1">S-adenosylmethionine-6-N', N'-adenosyl(rRNA) dimethyltransferase</fullName>
    </alternativeName>
</protein>
<accession>Q2RXA9</accession>
<keyword id="KW-0963">Cytoplasm</keyword>
<keyword id="KW-0489">Methyltransferase</keyword>
<keyword id="KW-1185">Reference proteome</keyword>
<keyword id="KW-0694">RNA-binding</keyword>
<keyword id="KW-0698">rRNA processing</keyword>
<keyword id="KW-0949">S-adenosyl-L-methionine</keyword>
<keyword id="KW-0808">Transferase</keyword>
<reference key="1">
    <citation type="journal article" date="2011" name="Stand. Genomic Sci.">
        <title>Complete genome sequence of Rhodospirillum rubrum type strain (S1).</title>
        <authorList>
            <person name="Munk A.C."/>
            <person name="Copeland A."/>
            <person name="Lucas S."/>
            <person name="Lapidus A."/>
            <person name="Del Rio T.G."/>
            <person name="Barry K."/>
            <person name="Detter J.C."/>
            <person name="Hammon N."/>
            <person name="Israni S."/>
            <person name="Pitluck S."/>
            <person name="Brettin T."/>
            <person name="Bruce D."/>
            <person name="Han C."/>
            <person name="Tapia R."/>
            <person name="Gilna P."/>
            <person name="Schmutz J."/>
            <person name="Larimer F."/>
            <person name="Land M."/>
            <person name="Kyrpides N.C."/>
            <person name="Mavromatis K."/>
            <person name="Richardson P."/>
            <person name="Rohde M."/>
            <person name="Goeker M."/>
            <person name="Klenk H.P."/>
            <person name="Zhang Y."/>
            <person name="Roberts G.P."/>
            <person name="Reslewic S."/>
            <person name="Schwartz D.C."/>
        </authorList>
    </citation>
    <scope>NUCLEOTIDE SEQUENCE [LARGE SCALE GENOMIC DNA]</scope>
    <source>
        <strain>ATCC 11170 / ATH 1.1.1 / DSM 467 / LMG 4362 / NCIMB 8255 / S1</strain>
    </source>
</reference>
<sequence length="288" mass="30698">MSDPIDVAAETPGDGLPPLREVIATHGLDARRSLGQNFLFDLNLTGRIARAGGEIDQGTVIEIGPGPGGLTRALLGAGARRVIAIERDSRCRGVLAEIAAVWPGRLETIEGDALDIDVAALGEAPRRVIANLPYNVATPLLIGWLRHASAFERFVLMFQKEVVDRLAARPGTKDYGRLSVITQWLCEVRPLFDVNPRAFTPPPKVVSTVVRIDPRPQPLAPARMETLERVTAAAFGQRRKMLRASLKALGDAEGLCAAAGLDPTARAETIPVEGFAALARAVDAAGSV</sequence>
<name>RSMA_RHORT</name>
<gene>
    <name evidence="1" type="primary">rsmA</name>
    <name evidence="1" type="synonym">ksgA</name>
    <name type="ordered locus">Rru_A0431</name>
</gene>
<comment type="function">
    <text evidence="1">Specifically dimethylates two adjacent adenosines (A1518 and A1519) in the loop of a conserved hairpin near the 3'-end of 16S rRNA in the 30S particle. May play a critical role in biogenesis of 30S subunits.</text>
</comment>
<comment type="catalytic activity">
    <reaction evidence="1">
        <text>adenosine(1518)/adenosine(1519) in 16S rRNA + 4 S-adenosyl-L-methionine = N(6)-dimethyladenosine(1518)/N(6)-dimethyladenosine(1519) in 16S rRNA + 4 S-adenosyl-L-homocysteine + 4 H(+)</text>
        <dbReference type="Rhea" id="RHEA:19609"/>
        <dbReference type="Rhea" id="RHEA-COMP:10232"/>
        <dbReference type="Rhea" id="RHEA-COMP:10233"/>
        <dbReference type="ChEBI" id="CHEBI:15378"/>
        <dbReference type="ChEBI" id="CHEBI:57856"/>
        <dbReference type="ChEBI" id="CHEBI:59789"/>
        <dbReference type="ChEBI" id="CHEBI:74411"/>
        <dbReference type="ChEBI" id="CHEBI:74493"/>
        <dbReference type="EC" id="2.1.1.182"/>
    </reaction>
</comment>
<comment type="subcellular location">
    <subcellularLocation>
        <location evidence="1">Cytoplasm</location>
    </subcellularLocation>
</comment>
<comment type="similarity">
    <text evidence="1">Belongs to the class I-like SAM-binding methyltransferase superfamily. rRNA adenine N(6)-methyltransferase family. RsmA subfamily.</text>
</comment>
<proteinExistence type="inferred from homology"/>
<dbReference type="EC" id="2.1.1.182" evidence="1"/>
<dbReference type="EMBL" id="CP000230">
    <property type="protein sequence ID" value="ABC21236.1"/>
    <property type="molecule type" value="Genomic_DNA"/>
</dbReference>
<dbReference type="RefSeq" id="WP_011388190.1">
    <property type="nucleotide sequence ID" value="NC_007643.1"/>
</dbReference>
<dbReference type="RefSeq" id="YP_425523.1">
    <property type="nucleotide sequence ID" value="NC_007643.1"/>
</dbReference>
<dbReference type="SMR" id="Q2RXA9"/>
<dbReference type="STRING" id="269796.Rru_A0431"/>
<dbReference type="EnsemblBacteria" id="ABC21236">
    <property type="protein sequence ID" value="ABC21236"/>
    <property type="gene ID" value="Rru_A0431"/>
</dbReference>
<dbReference type="KEGG" id="rru:Rru_A0431"/>
<dbReference type="PATRIC" id="fig|269796.9.peg.487"/>
<dbReference type="eggNOG" id="COG0030">
    <property type="taxonomic scope" value="Bacteria"/>
</dbReference>
<dbReference type="HOGENOM" id="CLU_041220_0_1_5"/>
<dbReference type="PhylomeDB" id="Q2RXA9"/>
<dbReference type="Proteomes" id="UP000001929">
    <property type="component" value="Chromosome"/>
</dbReference>
<dbReference type="GO" id="GO:0005829">
    <property type="term" value="C:cytosol"/>
    <property type="evidence" value="ECO:0007669"/>
    <property type="project" value="TreeGrafter"/>
</dbReference>
<dbReference type="GO" id="GO:0052908">
    <property type="term" value="F:16S rRNA (adenine(1518)-N(6)/adenine(1519)-N(6))-dimethyltransferase activity"/>
    <property type="evidence" value="ECO:0007669"/>
    <property type="project" value="UniProtKB-EC"/>
</dbReference>
<dbReference type="GO" id="GO:0003723">
    <property type="term" value="F:RNA binding"/>
    <property type="evidence" value="ECO:0007669"/>
    <property type="project" value="UniProtKB-KW"/>
</dbReference>
<dbReference type="CDD" id="cd02440">
    <property type="entry name" value="AdoMet_MTases"/>
    <property type="match status" value="1"/>
</dbReference>
<dbReference type="Gene3D" id="1.10.8.100">
    <property type="entry name" value="Ribosomal RNA adenine dimethylase-like, domain 2"/>
    <property type="match status" value="1"/>
</dbReference>
<dbReference type="Gene3D" id="3.40.50.150">
    <property type="entry name" value="Vaccinia Virus protein VP39"/>
    <property type="match status" value="1"/>
</dbReference>
<dbReference type="HAMAP" id="MF_00607">
    <property type="entry name" value="16SrRNA_methyltr_A"/>
    <property type="match status" value="1"/>
</dbReference>
<dbReference type="InterPro" id="IPR001737">
    <property type="entry name" value="KsgA/Erm"/>
</dbReference>
<dbReference type="InterPro" id="IPR023165">
    <property type="entry name" value="rRNA_Ade_diMease-like_C"/>
</dbReference>
<dbReference type="InterPro" id="IPR020596">
    <property type="entry name" value="rRNA_Ade_Mease_Trfase_CS"/>
</dbReference>
<dbReference type="InterPro" id="IPR020598">
    <property type="entry name" value="rRNA_Ade_methylase_Trfase_N"/>
</dbReference>
<dbReference type="InterPro" id="IPR011530">
    <property type="entry name" value="rRNA_adenine_dimethylase"/>
</dbReference>
<dbReference type="InterPro" id="IPR029063">
    <property type="entry name" value="SAM-dependent_MTases_sf"/>
</dbReference>
<dbReference type="NCBIfam" id="TIGR00755">
    <property type="entry name" value="ksgA"/>
    <property type="match status" value="1"/>
</dbReference>
<dbReference type="PANTHER" id="PTHR11727">
    <property type="entry name" value="DIMETHYLADENOSINE TRANSFERASE"/>
    <property type="match status" value="1"/>
</dbReference>
<dbReference type="PANTHER" id="PTHR11727:SF7">
    <property type="entry name" value="DIMETHYLADENOSINE TRANSFERASE-RELATED"/>
    <property type="match status" value="1"/>
</dbReference>
<dbReference type="Pfam" id="PF00398">
    <property type="entry name" value="RrnaAD"/>
    <property type="match status" value="1"/>
</dbReference>
<dbReference type="SMART" id="SM00650">
    <property type="entry name" value="rADc"/>
    <property type="match status" value="1"/>
</dbReference>
<dbReference type="SUPFAM" id="SSF53335">
    <property type="entry name" value="S-adenosyl-L-methionine-dependent methyltransferases"/>
    <property type="match status" value="1"/>
</dbReference>
<dbReference type="PROSITE" id="PS01131">
    <property type="entry name" value="RRNA_A_DIMETH"/>
    <property type="match status" value="1"/>
</dbReference>
<dbReference type="PROSITE" id="PS51689">
    <property type="entry name" value="SAM_RNA_A_N6_MT"/>
    <property type="match status" value="1"/>
</dbReference>